<protein>
    <recommendedName>
        <fullName evidence="1">Cysteine--tRNA ligase</fullName>
        <ecNumber evidence="1">6.1.1.16</ecNumber>
    </recommendedName>
    <alternativeName>
        <fullName evidence="1">Cysteinyl-tRNA synthetase</fullName>
        <shortName evidence="1">CysRS</shortName>
    </alternativeName>
</protein>
<evidence type="ECO:0000255" key="1">
    <source>
        <dbReference type="HAMAP-Rule" id="MF_00041"/>
    </source>
</evidence>
<proteinExistence type="inferred from homology"/>
<reference key="1">
    <citation type="submission" date="2004-11" db="EMBL/GenBank/DDBJ databases">
        <title>Complete genome sequence of Thermus thermophilus HB8.</title>
        <authorList>
            <person name="Masui R."/>
            <person name="Kurokawa K."/>
            <person name="Nakagawa N."/>
            <person name="Tokunaga F."/>
            <person name="Koyama Y."/>
            <person name="Shibata T."/>
            <person name="Oshima T."/>
            <person name="Yokoyama S."/>
            <person name="Yasunaga T."/>
            <person name="Kuramitsu S."/>
        </authorList>
    </citation>
    <scope>NUCLEOTIDE SEQUENCE [LARGE SCALE GENOMIC DNA]</scope>
    <source>
        <strain>ATCC 27634 / DSM 579 / HB8</strain>
    </source>
</reference>
<keyword id="KW-0030">Aminoacyl-tRNA synthetase</keyword>
<keyword id="KW-0067">ATP-binding</keyword>
<keyword id="KW-0963">Cytoplasm</keyword>
<keyword id="KW-0436">Ligase</keyword>
<keyword id="KW-0479">Metal-binding</keyword>
<keyword id="KW-0547">Nucleotide-binding</keyword>
<keyword id="KW-0648">Protein biosynthesis</keyword>
<keyword id="KW-1185">Reference proteome</keyword>
<keyword id="KW-0862">Zinc</keyword>
<gene>
    <name evidence="1" type="primary">cysS</name>
    <name type="ordered locus">TTHA0893</name>
</gene>
<name>SYC_THET8</name>
<dbReference type="EC" id="6.1.1.16" evidence="1"/>
<dbReference type="EMBL" id="AP008226">
    <property type="protein sequence ID" value="BAD70716.1"/>
    <property type="molecule type" value="Genomic_DNA"/>
</dbReference>
<dbReference type="RefSeq" id="WP_011228277.1">
    <property type="nucleotide sequence ID" value="NC_006461.1"/>
</dbReference>
<dbReference type="RefSeq" id="YP_144159.1">
    <property type="nucleotide sequence ID" value="NC_006461.1"/>
</dbReference>
<dbReference type="SMR" id="Q5SJV9"/>
<dbReference type="EnsemblBacteria" id="BAD70716">
    <property type="protein sequence ID" value="BAD70716"/>
    <property type="gene ID" value="BAD70716"/>
</dbReference>
<dbReference type="GeneID" id="3169887"/>
<dbReference type="KEGG" id="ttj:TTHA0893"/>
<dbReference type="PATRIC" id="fig|300852.9.peg.885"/>
<dbReference type="eggNOG" id="COG0215">
    <property type="taxonomic scope" value="Bacteria"/>
</dbReference>
<dbReference type="HOGENOM" id="CLU_013528_0_1_0"/>
<dbReference type="PhylomeDB" id="Q5SJV9"/>
<dbReference type="Proteomes" id="UP000000532">
    <property type="component" value="Chromosome"/>
</dbReference>
<dbReference type="GO" id="GO:0005829">
    <property type="term" value="C:cytosol"/>
    <property type="evidence" value="ECO:0007669"/>
    <property type="project" value="TreeGrafter"/>
</dbReference>
<dbReference type="GO" id="GO:0005524">
    <property type="term" value="F:ATP binding"/>
    <property type="evidence" value="ECO:0007669"/>
    <property type="project" value="UniProtKB-UniRule"/>
</dbReference>
<dbReference type="GO" id="GO:0004817">
    <property type="term" value="F:cysteine-tRNA ligase activity"/>
    <property type="evidence" value="ECO:0007669"/>
    <property type="project" value="UniProtKB-UniRule"/>
</dbReference>
<dbReference type="GO" id="GO:0008270">
    <property type="term" value="F:zinc ion binding"/>
    <property type="evidence" value="ECO:0007669"/>
    <property type="project" value="UniProtKB-UniRule"/>
</dbReference>
<dbReference type="GO" id="GO:0006423">
    <property type="term" value="P:cysteinyl-tRNA aminoacylation"/>
    <property type="evidence" value="ECO:0007669"/>
    <property type="project" value="UniProtKB-UniRule"/>
</dbReference>
<dbReference type="CDD" id="cd00672">
    <property type="entry name" value="CysRS_core"/>
    <property type="match status" value="1"/>
</dbReference>
<dbReference type="Gene3D" id="1.20.120.1910">
    <property type="entry name" value="Cysteine-tRNA ligase, C-terminal anti-codon recognition domain"/>
    <property type="match status" value="1"/>
</dbReference>
<dbReference type="Gene3D" id="3.40.50.620">
    <property type="entry name" value="HUPs"/>
    <property type="match status" value="1"/>
</dbReference>
<dbReference type="HAMAP" id="MF_00041">
    <property type="entry name" value="Cys_tRNA_synth"/>
    <property type="match status" value="1"/>
</dbReference>
<dbReference type="InterPro" id="IPR015803">
    <property type="entry name" value="Cys-tRNA-ligase"/>
</dbReference>
<dbReference type="InterPro" id="IPR015273">
    <property type="entry name" value="Cys-tRNA-synt_Ia_DALR"/>
</dbReference>
<dbReference type="InterPro" id="IPR024909">
    <property type="entry name" value="Cys-tRNA/MSH_ligase"/>
</dbReference>
<dbReference type="InterPro" id="IPR056411">
    <property type="entry name" value="CysS_C"/>
</dbReference>
<dbReference type="InterPro" id="IPR014729">
    <property type="entry name" value="Rossmann-like_a/b/a_fold"/>
</dbReference>
<dbReference type="InterPro" id="IPR032678">
    <property type="entry name" value="tRNA-synt_1_cat_dom"/>
</dbReference>
<dbReference type="InterPro" id="IPR009080">
    <property type="entry name" value="tRNAsynth_Ia_anticodon-bd"/>
</dbReference>
<dbReference type="NCBIfam" id="TIGR00435">
    <property type="entry name" value="cysS"/>
    <property type="match status" value="1"/>
</dbReference>
<dbReference type="PANTHER" id="PTHR10890:SF3">
    <property type="entry name" value="CYSTEINE--TRNA LIGASE, CYTOPLASMIC"/>
    <property type="match status" value="1"/>
</dbReference>
<dbReference type="PANTHER" id="PTHR10890">
    <property type="entry name" value="CYSTEINYL-TRNA SYNTHETASE"/>
    <property type="match status" value="1"/>
</dbReference>
<dbReference type="Pfam" id="PF23493">
    <property type="entry name" value="CysS_C"/>
    <property type="match status" value="1"/>
</dbReference>
<dbReference type="Pfam" id="PF09190">
    <property type="entry name" value="DALR_2"/>
    <property type="match status" value="1"/>
</dbReference>
<dbReference type="Pfam" id="PF01406">
    <property type="entry name" value="tRNA-synt_1e"/>
    <property type="match status" value="1"/>
</dbReference>
<dbReference type="PRINTS" id="PR00983">
    <property type="entry name" value="TRNASYNTHCYS"/>
</dbReference>
<dbReference type="SMART" id="SM00840">
    <property type="entry name" value="DALR_2"/>
    <property type="match status" value="1"/>
</dbReference>
<dbReference type="SUPFAM" id="SSF47323">
    <property type="entry name" value="Anticodon-binding domain of a subclass of class I aminoacyl-tRNA synthetases"/>
    <property type="match status" value="1"/>
</dbReference>
<dbReference type="SUPFAM" id="SSF52374">
    <property type="entry name" value="Nucleotidylyl transferase"/>
    <property type="match status" value="1"/>
</dbReference>
<feature type="chain" id="PRO_0000159508" description="Cysteine--tRNA ligase">
    <location>
        <begin position="1"/>
        <end position="480"/>
    </location>
</feature>
<feature type="short sequence motif" description="'HIGH' region">
    <location>
        <begin position="31"/>
        <end position="41"/>
    </location>
</feature>
<feature type="short sequence motif" description="'KMSKS' region">
    <location>
        <begin position="276"/>
        <end position="280"/>
    </location>
</feature>
<feature type="binding site" evidence="1">
    <location>
        <position position="29"/>
    </location>
    <ligand>
        <name>Zn(2+)</name>
        <dbReference type="ChEBI" id="CHEBI:29105"/>
    </ligand>
</feature>
<feature type="binding site" evidence="1">
    <location>
        <position position="220"/>
    </location>
    <ligand>
        <name>Zn(2+)</name>
        <dbReference type="ChEBI" id="CHEBI:29105"/>
    </ligand>
</feature>
<feature type="binding site" evidence="1">
    <location>
        <position position="245"/>
    </location>
    <ligand>
        <name>Zn(2+)</name>
        <dbReference type="ChEBI" id="CHEBI:29105"/>
    </ligand>
</feature>
<feature type="binding site" evidence="1">
    <location>
        <position position="249"/>
    </location>
    <ligand>
        <name>Zn(2+)</name>
        <dbReference type="ChEBI" id="CHEBI:29105"/>
    </ligand>
</feature>
<feature type="binding site" evidence="1">
    <location>
        <position position="279"/>
    </location>
    <ligand>
        <name>ATP</name>
        <dbReference type="ChEBI" id="CHEBI:30616"/>
    </ligand>
</feature>
<comment type="catalytic activity">
    <reaction evidence="1">
        <text>tRNA(Cys) + L-cysteine + ATP = L-cysteinyl-tRNA(Cys) + AMP + diphosphate</text>
        <dbReference type="Rhea" id="RHEA:17773"/>
        <dbReference type="Rhea" id="RHEA-COMP:9661"/>
        <dbReference type="Rhea" id="RHEA-COMP:9679"/>
        <dbReference type="ChEBI" id="CHEBI:30616"/>
        <dbReference type="ChEBI" id="CHEBI:33019"/>
        <dbReference type="ChEBI" id="CHEBI:35235"/>
        <dbReference type="ChEBI" id="CHEBI:78442"/>
        <dbReference type="ChEBI" id="CHEBI:78517"/>
        <dbReference type="ChEBI" id="CHEBI:456215"/>
        <dbReference type="EC" id="6.1.1.16"/>
    </reaction>
</comment>
<comment type="cofactor">
    <cofactor evidence="1">
        <name>Zn(2+)</name>
        <dbReference type="ChEBI" id="CHEBI:29105"/>
    </cofactor>
    <text evidence="1">Binds 1 zinc ion per subunit.</text>
</comment>
<comment type="subunit">
    <text evidence="1">Monomer.</text>
</comment>
<comment type="subcellular location">
    <subcellularLocation>
        <location evidence="1">Cytoplasm</location>
    </subcellularLocation>
</comment>
<comment type="similarity">
    <text evidence="1">Belongs to the class-I aminoacyl-tRNA synthetase family.</text>
</comment>
<organism>
    <name type="scientific">Thermus thermophilus (strain ATCC 27634 / DSM 579 / HB8)</name>
    <dbReference type="NCBI Taxonomy" id="300852"/>
    <lineage>
        <taxon>Bacteria</taxon>
        <taxon>Thermotogati</taxon>
        <taxon>Deinococcota</taxon>
        <taxon>Deinococci</taxon>
        <taxon>Thermales</taxon>
        <taxon>Thermaceae</taxon>
        <taxon>Thermus</taxon>
    </lineage>
</organism>
<sequence>MGLVIYDTLARRKVPFEPAVPGHVGIYVCGPTVYADPHLGHARGPVVYDVLRRYLLHKGYKVRFVSNITDVGHLTDDADEGEDKIVRRAKLERLEPMEVAEKYTWSYFDAMQALNVLRPSIAPRASGHIPEMLELTERLLARGVAYERKGSVYFRVRSFPEYGKLSGKRLEELRAGARVEVREEKEDPLDFALWKAAEPGHIMRWKSPWGEGYPGWHIECTAMSLKYLGEGFDLHAGGIDLQFPHHECEIAQAEAAGFRFARHWMHHNHVLLEGEKMAKSTGNLVLLHDLLEAHEPMALRFYLLQTHYRSPMDFTWEGLESAKRGYGRLLHAYREVRGRKKTAPPGTTPELERALDALEKAFMEAIEDDLSTPEALAALFAFLPELHKLLPEAKAESLARAEAVFHTLGEGILGLFPERVLEERVSGPLLEGLIALLLELREEARRAKDYEKSDLIRERLRALGVIVEDTKEGPRWRLER</sequence>
<accession>Q5SJV9</accession>